<proteinExistence type="evidence at protein level"/>
<organism>
    <name type="scientific">Oryza sativa subsp. japonica</name>
    <name type="common">Rice</name>
    <dbReference type="NCBI Taxonomy" id="39947"/>
    <lineage>
        <taxon>Eukaryota</taxon>
        <taxon>Viridiplantae</taxon>
        <taxon>Streptophyta</taxon>
        <taxon>Embryophyta</taxon>
        <taxon>Tracheophyta</taxon>
        <taxon>Spermatophyta</taxon>
        <taxon>Magnoliopsida</taxon>
        <taxon>Liliopsida</taxon>
        <taxon>Poales</taxon>
        <taxon>Poaceae</taxon>
        <taxon>BOP clade</taxon>
        <taxon>Oryzoideae</taxon>
        <taxon>Oryzeae</taxon>
        <taxon>Oryzinae</taxon>
        <taxon>Oryza</taxon>
        <taxon>Oryza sativa</taxon>
    </lineage>
</organism>
<accession>A0A0P0XCU3</accession>
<accession>Q6Z1D6</accession>
<dbReference type="EC" id="2.4.1.21" evidence="13"/>
<dbReference type="EMBL" id="AP005441">
    <property type="protein sequence ID" value="BAD05589.1"/>
    <property type="status" value="ALT_SEQ"/>
    <property type="molecule type" value="Genomic_DNA"/>
</dbReference>
<dbReference type="EMBL" id="AP014964">
    <property type="protein sequence ID" value="BAT04174.1"/>
    <property type="status" value="ALT_SEQ"/>
    <property type="molecule type" value="Genomic_DNA"/>
</dbReference>
<dbReference type="RefSeq" id="XP_015650668.1">
    <molecule id="A0A0P0XCU3-2"/>
    <property type="nucleotide sequence ID" value="XM_015795182.1"/>
</dbReference>
<dbReference type="RefSeq" id="XP_015650669.1">
    <property type="nucleotide sequence ID" value="XM_015795183.1"/>
</dbReference>
<dbReference type="RefSeq" id="XP_015650670.1">
    <property type="nucleotide sequence ID" value="XM_015795184.1"/>
</dbReference>
<dbReference type="RefSeq" id="XP_015650671.1">
    <property type="nucleotide sequence ID" value="XM_015795185.1"/>
</dbReference>
<dbReference type="SMR" id="A0A0P0XCU3"/>
<dbReference type="FunCoup" id="A0A0P0XCU3">
    <property type="interactions" value="1107"/>
</dbReference>
<dbReference type="STRING" id="39947.A0A0P0XCU3"/>
<dbReference type="CAZy" id="CBM53">
    <property type="family name" value="Carbohydrate-Binding Module Family 53"/>
</dbReference>
<dbReference type="CAZy" id="GT5">
    <property type="family name" value="Glycosyltransferase Family 5"/>
</dbReference>
<dbReference type="PaxDb" id="39947-A0A0P0XCU3"/>
<dbReference type="GeneID" id="9268758"/>
<dbReference type="KEGG" id="osa:9268758"/>
<dbReference type="eggNOG" id="ENOG502QQTU">
    <property type="taxonomic scope" value="Eukaryota"/>
</dbReference>
<dbReference type="HOGENOM" id="CLU_002856_1_0_1"/>
<dbReference type="InParanoid" id="A0A0P0XCU3"/>
<dbReference type="OrthoDB" id="639559at2759"/>
<dbReference type="UniPathway" id="UPA00152"/>
<dbReference type="Proteomes" id="UP000000763">
    <property type="component" value="Chromosome 8"/>
</dbReference>
<dbReference type="Proteomes" id="UP000059680">
    <property type="component" value="Chromosome 8"/>
</dbReference>
<dbReference type="GO" id="GO:0009501">
    <property type="term" value="C:amyloplast"/>
    <property type="evidence" value="ECO:0007669"/>
    <property type="project" value="UniProtKB-SubCell"/>
</dbReference>
<dbReference type="GO" id="GO:0009507">
    <property type="term" value="C:chloroplast"/>
    <property type="evidence" value="ECO:0007669"/>
    <property type="project" value="UniProtKB-SubCell"/>
</dbReference>
<dbReference type="GO" id="GO:0009011">
    <property type="term" value="F:alpha-1,4-glucan glucosyltransferase (ADP-glucose donor) activity"/>
    <property type="evidence" value="ECO:0007669"/>
    <property type="project" value="UniProtKB-EC"/>
</dbReference>
<dbReference type="GO" id="GO:0004373">
    <property type="term" value="F:alpha-1,4-glucan glucosyltransferase (UDP-glucose donor) activity"/>
    <property type="evidence" value="ECO:0007669"/>
    <property type="project" value="InterPro"/>
</dbReference>
<dbReference type="GO" id="GO:2001070">
    <property type="term" value="F:starch binding"/>
    <property type="evidence" value="ECO:0007669"/>
    <property type="project" value="InterPro"/>
</dbReference>
<dbReference type="GO" id="GO:0010021">
    <property type="term" value="P:amylopectin biosynthetic process"/>
    <property type="evidence" value="ECO:0000315"/>
    <property type="project" value="UniProtKB"/>
</dbReference>
<dbReference type="GO" id="GO:0009960">
    <property type="term" value="P:endosperm development"/>
    <property type="evidence" value="ECO:0000315"/>
    <property type="project" value="UniProtKB"/>
</dbReference>
<dbReference type="GO" id="GO:0019252">
    <property type="term" value="P:starch biosynthetic process"/>
    <property type="evidence" value="ECO:0000315"/>
    <property type="project" value="UniProtKB"/>
</dbReference>
<dbReference type="CDD" id="cd03791">
    <property type="entry name" value="GT5_Glycogen_synthase_DULL1-like"/>
    <property type="match status" value="1"/>
</dbReference>
<dbReference type="FunFam" id="2.60.40.10:FF:002135">
    <property type="entry name" value="Soluble starch synthase 3a, chloroplastic/amyloplastic"/>
    <property type="match status" value="1"/>
</dbReference>
<dbReference type="FunFam" id="2.60.40.10:FF:001903">
    <property type="entry name" value="Starch synthase 3, chloroplastic/amyloplastic"/>
    <property type="match status" value="1"/>
</dbReference>
<dbReference type="FunFam" id="3.40.50.2000:FF:000165">
    <property type="entry name" value="Starch synthase, chloroplastic/amyloplastic"/>
    <property type="match status" value="1"/>
</dbReference>
<dbReference type="Gene3D" id="3.40.50.2000">
    <property type="entry name" value="Glycogen Phosphorylase B"/>
    <property type="match status" value="2"/>
</dbReference>
<dbReference type="Gene3D" id="2.60.40.10">
    <property type="entry name" value="Immunoglobulins"/>
    <property type="match status" value="2"/>
</dbReference>
<dbReference type="HAMAP" id="MF_00484">
    <property type="entry name" value="Glycogen_synth"/>
    <property type="match status" value="1"/>
</dbReference>
<dbReference type="InterPro" id="IPR005085">
    <property type="entry name" value="CBM25"/>
</dbReference>
<dbReference type="InterPro" id="IPR001296">
    <property type="entry name" value="Glyco_trans_1"/>
</dbReference>
<dbReference type="InterPro" id="IPR011835">
    <property type="entry name" value="GS/SS"/>
</dbReference>
<dbReference type="InterPro" id="IPR013783">
    <property type="entry name" value="Ig-like_fold"/>
</dbReference>
<dbReference type="InterPro" id="IPR013534">
    <property type="entry name" value="Starch_synth_cat_dom"/>
</dbReference>
<dbReference type="PANTHER" id="PTHR46083">
    <property type="match status" value="1"/>
</dbReference>
<dbReference type="PANTHER" id="PTHR46083:SF5">
    <property type="entry name" value="STARCH SYNTHASE 3, CHLOROPLASTIC_AMYLOPLASTIC"/>
    <property type="match status" value="1"/>
</dbReference>
<dbReference type="Pfam" id="PF16760">
    <property type="entry name" value="CBM53"/>
    <property type="match status" value="3"/>
</dbReference>
<dbReference type="Pfam" id="PF08323">
    <property type="entry name" value="Glyco_transf_5"/>
    <property type="match status" value="1"/>
</dbReference>
<dbReference type="Pfam" id="PF00534">
    <property type="entry name" value="Glycos_transf_1"/>
    <property type="match status" value="1"/>
</dbReference>
<dbReference type="SMART" id="SM01066">
    <property type="entry name" value="CBM_25"/>
    <property type="match status" value="3"/>
</dbReference>
<dbReference type="SUPFAM" id="SSF53756">
    <property type="entry name" value="UDP-Glycosyltransferase/glycogen phosphorylase"/>
    <property type="match status" value="1"/>
</dbReference>
<comment type="function">
    <text evidence="5 6 7 8 9">Involved in starch synthesis in endosperm amyloplasts (PubMed:17297616, PubMed:17586688, PubMed:21417378, PubMed:21595523, PubMed:21730357). Plays an important role in the elongation of amylopectin B chains (PubMed:17297616, PubMed:17586688, PubMed:21417378, PubMed:21595523, PubMed:21730357).</text>
</comment>
<comment type="catalytic activity">
    <reaction evidence="13">
        <text>[(1-&gt;4)-alpha-D-glucosyl](n) + ADP-alpha-D-glucose = [(1-&gt;4)-alpha-D-glucosyl](n+1) + ADP + H(+)</text>
        <dbReference type="Rhea" id="RHEA:18189"/>
        <dbReference type="Rhea" id="RHEA-COMP:9584"/>
        <dbReference type="Rhea" id="RHEA-COMP:9587"/>
        <dbReference type="ChEBI" id="CHEBI:15378"/>
        <dbReference type="ChEBI" id="CHEBI:15444"/>
        <dbReference type="ChEBI" id="CHEBI:57498"/>
        <dbReference type="ChEBI" id="CHEBI:456216"/>
        <dbReference type="EC" id="2.4.1.21"/>
    </reaction>
</comment>
<comment type="pathway">
    <text evidence="13">Glycan biosynthesis; starch biosynthesis.</text>
</comment>
<comment type="subcellular location">
    <subcellularLocation>
        <location evidence="13">Plastid</location>
        <location evidence="13">Chloroplast</location>
    </subcellularLocation>
    <subcellularLocation>
        <location evidence="13">Plastid</location>
        <location evidence="13">Amyloplast</location>
    </subcellularLocation>
    <text evidence="13">Amyloplast or chloroplast, soluble.</text>
</comment>
<comment type="alternative products">
    <event type="alternative splicing"/>
    <isoform>
        <id>A0A0P0XCU3-1</id>
        <name>1</name>
        <sequence type="displayed"/>
    </isoform>
    <isoform>
        <id>A0A0P0XCU3-2</id>
        <name>2</name>
        <sequence type="described" ref="VSP_059965 VSP_059966"/>
    </isoform>
</comment>
<comment type="tissue specificity">
    <text evidence="3 4">Expressed in the endosperm.</text>
</comment>
<comment type="developmental stage">
    <text evidence="3 4">Expressed in developing caryopsis from 5 to 15 days after flowering.</text>
</comment>
<comment type="disruption phenotype">
    <text evidence="5 6 7 10">White-core floury endosperm (PubMed:17297616, PubMed:27791174). Increased content of resistant starch (RS) (PubMed:27791174). Endosperm containing increased levels of amylose (PubMed:17297616, PubMed:21417378). Reduced content of long amylopectin chains with a degree of polymerization (DP) of 30 or greater (PubMed:17297616, PubMed:17586688). Reduced content of amylopectin chains with a DP of 6 to 8 and a DP of 16 to 20, but increased content of chains with a DP of 9 to 15 and a DP of 22 to 29 (PubMed:17297616, PubMed:17586688). Decrease in average length of amylopectin chains (PubMed:21417378).</text>
</comment>
<comment type="biotechnology">
    <text evidence="10">Selection of varieties with reduced SSIIIA activity may be a tool to increase resistant starch (RS) content of rice grain.</text>
</comment>
<comment type="similarity">
    <text evidence="13">Belongs to the glycosyltransferase 1 family. Bacterial/plant glycogen synthase subfamily.</text>
</comment>
<comment type="sequence caution" evidence="13">
    <conflict type="erroneous gene model prediction">
        <sequence resource="EMBL-CDS" id="BAD05589"/>
    </conflict>
</comment>
<comment type="sequence caution" evidence="13">
    <conflict type="erroneous gene model prediction">
        <sequence resource="EMBL-CDS" id="BAT04174"/>
    </conflict>
</comment>
<sequence length="1875" mass="210833">MEMALRPQSLLCPRSRLKVVIRPASSASGGGLAQYFLMTRRYTGSRIVRCMVSSSDCPNRKAKRTISLHTEVASSRGYAPRIAAESSIQEREHINSDEETFDTYNRLLRNESTEWKKLDTTEVDLSQDVSSSSMRKVDATDEAKLDILEDDLPRNLLNGVTMGEVDMLDEAGAEDDVFEVDLSALHNSTVGKMDAVNEVGTENDLFEVDLSALHSAAVGKVDVVDGAKAKEDLFEMDSLALHSVTMGKVDAINAAGAEGDKFEVDLSALASNNSMIEAVNVMDEAKAIEDTLEVDLSGNATSSSTYGEVKFEVDSLGNTSSTVMYGPADGAYEPRSDEVTFKVDSSENASNNVMYGRADVVDESWADEGIFEVDFFTNASSGAEYGKVDVVDEAKTDDFTFEIDSLEKDSNNKMHGKAHMVDEAWDDEAIFEVDLFGNASSIPIYGEVNVLDEARADDGKFEVDLLGNTSSNSTHEEVDVVDEAQTGEATFEVDLLGNALSSAIYKEVPVMGGAQDDEVDVDFSINASITETEKEADAVDEARVEDETFDMDLVGKQISIDSMNDDVVEEGTKHHRYPMLSSAFIEVKTIHETPVSLKPELMSVVMDQEQDKPISSVYQQEGSIFNLHAENQSTVDFHEREQMAITFDKQKESVAKLSKEDQQTAGLPEQNMSFDGVHRKSQSIIGLPFQHQSIVSSPEKYRSIVGFHGQNQSIISSHKQDKSIVGVPKKIQSIVGSTKHDDSIVGFRKQDRSIVSVPEQKQSIVGFHKQDLSIVAVSEQNLSIVAIPRESQSKQISIVRRHDPLHLKEVETKDRDGISKKSGGDDDLPHMLFEEELSQVEDVARAIAYKKQHEVDVISLTPDIQESPQDNIDPQELRRMLQELADQNCSMGNKLFVFPEAVKANSTIDVYLNRNLSALANEPDVHIKGAFNSWRWRPFTERLHKSELSGDWWSCKLHIPKEAYRLDFVFFNGRLVYDNNDSNDFVLQVESTMDEDSFEEFLVEEKKRELERVATEEAERRRHAEEQQRMGEQRAAEQAAREQAKKEIELKKNKLQNLLSSARTHVDNLWHIEPSTYRQGDTVRLYYNRNSRPLMHSTEIWMHGGCNSWTDGLSIVERLVECDDENGDWWYANVHIPEKAFVLDWVFADGPPGNARNYDNNGRQDFHAILPNAMTNEEYWVEEENCIYTRLLHEIREREEAIKIKVEKRAKMKSEMKEKTMRMFLLSQKHIVYTEPLEIRAGTTVDVLYNPSNTVLNGKPEVWFRWSFNRWMHPSGVLPPKKMVKTEDGCHLKATVSVPSDAYMMDFVFSESEEGGIYDNRNGTDYHIPVSGSNAKEPPIHIVHIAVEMAPIAKVGGLADVVTSLSRAIQELGHHVEVILPKYNFMNQSNVKNLHVRQSFSLGGTEIKVWFGLVEDLSVYFLEPQNGMFGGGWVYGGNDAGRFGLFCQSALEFLLQSGSSPHIIHCHDWSSAPVAWLYKEHYAESRLATARIIFTIHNLEFGAHFIGKAMTYCDKATTVSHTYSKEVAGHGAIAPHRGKFYGILNGIDPDIWDPYTDNFIPMHYTSENVVEGKNAAKRALQQRFGLQQTDVPIVGIITRLTAQKGIHLIKHALHRTLERNGQVVLLGSAPDPRIQSDFCRLADSLHGENHGRVRLCLTYDEPLSHLIYAGSDFILVPSIFEPCGLTQLVAMRYGSIPIVRKTGGLYDTVFDVDHDKDRARVLGLEPNGFSFDGADCNGVDYALNRQQSLLGLKPAVGSTPSAKGSWSKTGPGTGLPWTTLNCTIQLTNFEAPIQRWQEKASIGRYYKLNETWLKVKIFYLSCRYKLTQTWFKVKIFYLSYTYICRIKTLYSMHKQLWEYVSAMFPILSFNYEYLI</sequence>
<feature type="transit peptide" description="Chloroplast" evidence="1">
    <location>
        <begin position="1"/>
        <end position="49"/>
    </location>
</feature>
<feature type="chain" id="PRO_0000445783" description="Soluble starch synthase 3a, chloroplastic/amyloplastic">
    <location>
        <begin position="50"/>
        <end position="1875"/>
    </location>
</feature>
<feature type="region of interest" description="Disordered" evidence="2">
    <location>
        <begin position="1014"/>
        <end position="1043"/>
    </location>
</feature>
<feature type="coiled-coil region" evidence="1">
    <location>
        <begin position="1007"/>
        <end position="1065"/>
    </location>
</feature>
<feature type="splice variant" id="VSP_059965" description="In isoform 2.">
    <original>QQSLLGLKPAVGSTPSAKGSWSKTGPGTGLPWTTLNCTIQLTN</original>
    <variation>AISSWFEARGWFHSLCKRVMEQDWSWNRPALDYIELYHSAHKF</variation>
    <location>
        <begin position="1746"/>
        <end position="1788"/>
    </location>
</feature>
<feature type="splice variant" id="VSP_059966" description="In isoform 2.">
    <location>
        <begin position="1789"/>
        <end position="1875"/>
    </location>
</feature>
<reference key="1">
    <citation type="journal article" date="2005" name="Nature">
        <title>The map-based sequence of the rice genome.</title>
        <authorList>
            <consortium name="International rice genome sequencing project (IRGSP)"/>
        </authorList>
    </citation>
    <scope>NUCLEOTIDE SEQUENCE [LARGE SCALE GENOMIC DNA]</scope>
    <source>
        <strain>cv. Nipponbare</strain>
    </source>
</reference>
<reference key="2">
    <citation type="journal article" date="2008" name="Nucleic Acids Res.">
        <title>The rice annotation project database (RAP-DB): 2008 update.</title>
        <authorList>
            <consortium name="The rice annotation project (RAP)"/>
        </authorList>
    </citation>
    <scope>GENOME REANNOTATION</scope>
    <source>
        <strain>cv. Nipponbare</strain>
    </source>
</reference>
<reference key="3">
    <citation type="journal article" date="2013" name="Rice">
        <title>Improvement of the Oryza sativa Nipponbare reference genome using next generation sequence and optical map data.</title>
        <authorList>
            <person name="Kawahara Y."/>
            <person name="de la Bastide M."/>
            <person name="Hamilton J.P."/>
            <person name="Kanamori H."/>
            <person name="McCombie W.R."/>
            <person name="Ouyang S."/>
            <person name="Schwartz D.C."/>
            <person name="Tanaka T."/>
            <person name="Wu J."/>
            <person name="Zhou S."/>
            <person name="Childs K.L."/>
            <person name="Davidson R.M."/>
            <person name="Lin H."/>
            <person name="Quesada-Ocampo L."/>
            <person name="Vaillancourt B."/>
            <person name="Sakai H."/>
            <person name="Lee S.S."/>
            <person name="Kim J."/>
            <person name="Numa H."/>
            <person name="Itoh T."/>
            <person name="Buell C.R."/>
            <person name="Matsumoto T."/>
        </authorList>
    </citation>
    <scope>GENOME REANNOTATION</scope>
    <source>
        <strain>cv. Nipponbare</strain>
    </source>
</reference>
<reference key="4">
    <citation type="journal article" date="2004" name="Planta">
        <title>A comprehensive expression analysis of the starch synthase gene family in rice (Oryza sativa L.).</title>
        <authorList>
            <person name="Hirose T."/>
            <person name="Terao T."/>
        </authorList>
    </citation>
    <scope>TISSUE SPECIFICITY</scope>
    <scope>DEVELOPMENTAL STAGE</scope>
</reference>
<reference key="5">
    <citation type="journal article" date="2005" name="J. Exp. Bot.">
        <title>Evolution and expression analysis of starch synthase III and IV in rice.</title>
        <authorList>
            <person name="Dian W."/>
            <person name="Jiang H."/>
            <person name="Wu P."/>
        </authorList>
    </citation>
    <scope>TISSUE SPECIFICITY</scope>
    <scope>DEVELOPMENTAL STAGE</scope>
</reference>
<reference key="6">
    <citation type="journal article" date="2007" name="Plant Cell Rep.">
        <title>Knockout of a starch synthase gene OsSSIIIa/Flo5 causes white-core floury endosperm in rice (Oryza sativa L.).</title>
        <authorList>
            <person name="Ryoo N."/>
            <person name="Yu C."/>
            <person name="Park C.S."/>
            <person name="Baik M.Y."/>
            <person name="Park I.M."/>
            <person name="Cho M.H."/>
            <person name="Bhoo S.H."/>
            <person name="An G."/>
            <person name="Hahn T.R."/>
            <person name="Jeon J.S."/>
        </authorList>
    </citation>
    <scope>FUNCTION</scope>
    <scope>DISRUPTION PHENOTYPE</scope>
    <source>
        <strain>cv. Dongjin</strain>
    </source>
</reference>
<reference key="7">
    <citation type="journal article" date="2007" name="Plant Physiol.">
        <title>Characterization of SSIIIa-deficient mutants of rice: the function of SSIIIa and pleiotropic effects by SSIIIa deficiency in the rice endosperm.</title>
        <authorList>
            <person name="Fujita N."/>
            <person name="Yoshida M."/>
            <person name="Kondo T."/>
            <person name="Saito K."/>
            <person name="Utsumi Y."/>
            <person name="Tokunaga T."/>
            <person name="Nishi A."/>
            <person name="Satoh H."/>
            <person name="Park J.H."/>
            <person name="Jane J.L."/>
            <person name="Miyao A."/>
            <person name="Hirochika H."/>
            <person name="Nakamura Y."/>
        </authorList>
    </citation>
    <scope>FUNCTION</scope>
    <scope>DISRUPTION PHENOTYPE</scope>
</reference>
<reference key="8">
    <citation type="journal article" date="2011" name="Biomacromolecules">
        <title>Structures of starches from rice mutants deficient in the starch synthase isozyme SSI or SSIIIa.</title>
        <authorList>
            <person name="Hanashiro I."/>
            <person name="Higuchi T."/>
            <person name="Aihara S."/>
            <person name="Nakamura Y."/>
            <person name="Fujita N."/>
        </authorList>
    </citation>
    <scope>FUNCTION</scope>
    <scope>DISRUPTION PHENOTYPE</scope>
</reference>
<reference key="9">
    <citation type="journal article" date="2011" name="Genome">
        <title>Double repression of soluble starch synthase genes SSIIa and SSIIIa in rice (Oryza sativa L.) uncovers interactive effects on the physicochemical properties of starch.</title>
        <authorList>
            <person name="Zhang G."/>
            <person name="Cheng Z."/>
            <person name="Zhang X."/>
            <person name="Guo X."/>
            <person name="Su N."/>
            <person name="Jiang L."/>
            <person name="Mao L."/>
            <person name="Wan J."/>
        </authorList>
    </citation>
    <scope>FUNCTION</scope>
</reference>
<reference key="10">
    <citation type="journal article" date="2011" name="J. Exp. Bot.">
        <title>Starch biosynthesis in rice endosperm requires the presence of either starch synthase I or IIIa.</title>
        <authorList>
            <person name="Fujita N."/>
            <person name="Satoh R."/>
            <person name="Hayashi A."/>
            <person name="Kodama M."/>
            <person name="Itoh R."/>
            <person name="Aihara S."/>
            <person name="Nakamura Y."/>
        </authorList>
    </citation>
    <scope>FUNCTION</scope>
</reference>
<reference key="11">
    <citation type="journal article" date="2016" name="Proc. Natl. Acad. Sci. U.S.A.">
        <title>Critical roles of soluble starch synthase SSIIIa and granule-bound starch synthase Waxy in synthesizing resistant starch in rice.</title>
        <authorList>
            <person name="Zhou H."/>
            <person name="Wang L."/>
            <person name="Liu G."/>
            <person name="Meng X."/>
            <person name="Jing Y."/>
            <person name="Shu X."/>
            <person name="Kong X."/>
            <person name="Sun J."/>
            <person name="Yu H."/>
            <person name="Smith S.M."/>
            <person name="Wu D."/>
            <person name="Li J."/>
        </authorList>
    </citation>
    <scope>BIOTECHNOLOGY</scope>
    <scope>DISRUPTION PHENOTYPE</scope>
</reference>
<name>SSY3A_ORYSJ</name>
<protein>
    <recommendedName>
        <fullName evidence="13">Soluble starch synthase 3a, chloroplastic/amyloplastic</fullName>
        <ecNumber evidence="13">2.4.1.21</ecNumber>
    </recommendedName>
    <alternativeName>
        <fullName evidence="12">Protein FLOURY ENDOSPERM 5</fullName>
    </alternativeName>
    <alternativeName>
        <fullName evidence="12">Soluble starch synthase IIIa</fullName>
        <shortName evidence="12">OsSSIIIa</shortName>
    </alternativeName>
</protein>
<keyword id="KW-0025">Alternative splicing</keyword>
<keyword id="KW-0035">Amyloplast</keyword>
<keyword id="KW-0150">Chloroplast</keyword>
<keyword id="KW-0175">Coiled coil</keyword>
<keyword id="KW-0328">Glycosyltransferase</keyword>
<keyword id="KW-0934">Plastid</keyword>
<keyword id="KW-1185">Reference proteome</keyword>
<keyword id="KW-0750">Starch biosynthesis</keyword>
<keyword id="KW-0808">Transferase</keyword>
<keyword id="KW-0809">Transit peptide</keyword>
<evidence type="ECO:0000255" key="1"/>
<evidence type="ECO:0000256" key="2">
    <source>
        <dbReference type="SAM" id="MobiDB-lite"/>
    </source>
</evidence>
<evidence type="ECO:0000269" key="3">
    <source>
    </source>
</evidence>
<evidence type="ECO:0000269" key="4">
    <source>
    </source>
</evidence>
<evidence type="ECO:0000269" key="5">
    <source>
    </source>
</evidence>
<evidence type="ECO:0000269" key="6">
    <source>
    </source>
</evidence>
<evidence type="ECO:0000269" key="7">
    <source>
    </source>
</evidence>
<evidence type="ECO:0000269" key="8">
    <source>
    </source>
</evidence>
<evidence type="ECO:0000269" key="9">
    <source>
    </source>
</evidence>
<evidence type="ECO:0000269" key="10">
    <source>
    </source>
</evidence>
<evidence type="ECO:0000303" key="11">
    <source>
    </source>
</evidence>
<evidence type="ECO:0000303" key="12">
    <source>
    </source>
</evidence>
<evidence type="ECO:0000305" key="13"/>
<evidence type="ECO:0000312" key="14">
    <source>
        <dbReference type="EMBL" id="BAD05589.1"/>
    </source>
</evidence>
<evidence type="ECO:0000312" key="15">
    <source>
        <dbReference type="EMBL" id="BAT04174.1"/>
    </source>
</evidence>
<gene>
    <name evidence="12" type="primary">SSIIIA</name>
    <name evidence="12" type="synonym">FLO5</name>
    <name evidence="13" type="synonym">SS3A</name>
    <name evidence="11" type="synonym">SSIII-2</name>
    <name evidence="15" type="ordered locus">Os08g0191433</name>
    <name evidence="13" type="ordered locus">LOC_Os08g09230</name>
    <name evidence="14" type="ORF">OSJNBa0056O06.4-1</name>
</gene>